<reference key="1">
    <citation type="journal article" date="2005" name="Nucleic Acids Res.">
        <title>The genome sequence of Salmonella enterica serovar Choleraesuis, a highly invasive and resistant zoonotic pathogen.</title>
        <authorList>
            <person name="Chiu C.-H."/>
            <person name="Tang P."/>
            <person name="Chu C."/>
            <person name="Hu S."/>
            <person name="Bao Q."/>
            <person name="Yu J."/>
            <person name="Chou Y.-Y."/>
            <person name="Wang H.-S."/>
            <person name="Lee Y.-S."/>
        </authorList>
    </citation>
    <scope>NUCLEOTIDE SEQUENCE [LARGE SCALE GENOMIC DNA]</scope>
    <source>
        <strain>SC-B67</strain>
    </source>
</reference>
<sequence length="316" mass="36593">MLSAFQLEKNRLTRLEVEESQSLIDAVWVDLVEPDDDERLRVQSELGQSLATRPELEDIEASARFFEDEDGLHIHSFFFFEDAEDHAGNSTVAFTIRDGRLFTLRERELPAFRLYRMRARSQAMVDGNAYELLLDLFETKIEQLADEIENIYSDLEKLSRVIMEGHQGDEYDEALSTLAELEDIGWKVRLCLMDTQRALNFLVRKARLPGGQLEQAREILRDIESLLPHNESLFQKVNFLMQAAMGFINIEQNRIIKIFSVVSVVFLPPTLVASSYGMNFEFMPELKWSFGYPGAIIFMILAGLAPYLYFKRKNWL</sequence>
<accession>Q57HQ5</accession>
<organism>
    <name type="scientific">Salmonella choleraesuis (strain SC-B67)</name>
    <dbReference type="NCBI Taxonomy" id="321314"/>
    <lineage>
        <taxon>Bacteria</taxon>
        <taxon>Pseudomonadati</taxon>
        <taxon>Pseudomonadota</taxon>
        <taxon>Gammaproteobacteria</taxon>
        <taxon>Enterobacterales</taxon>
        <taxon>Enterobacteriaceae</taxon>
        <taxon>Salmonella</taxon>
    </lineage>
</organism>
<gene>
    <name type="primary">corA</name>
    <name type="ordered locus">SCH_3851</name>
</gene>
<feature type="chain" id="PRO_0000239101" description="Magnesium transport protein CorA">
    <location>
        <begin position="1"/>
        <end position="316"/>
    </location>
</feature>
<feature type="transmembrane region" description="Helical" evidence="3">
    <location>
        <begin position="258"/>
        <end position="278"/>
    </location>
</feature>
<feature type="transmembrane region" description="Helical" evidence="3">
    <location>
        <begin position="290"/>
        <end position="310"/>
    </location>
</feature>
<feature type="short sequence motif" description="Probable selectivity filter" evidence="2">
    <location>
        <begin position="277"/>
        <end position="279"/>
    </location>
</feature>
<feature type="site" description="Essential for ion permeation" evidence="2">
    <location>
        <position position="253"/>
    </location>
</feature>
<evidence type="ECO:0000250" key="1">
    <source>
        <dbReference type="UniProtKB" id="P0ABI4"/>
    </source>
</evidence>
<evidence type="ECO:0000250" key="2">
    <source>
        <dbReference type="UniProtKB" id="Q9WZ31"/>
    </source>
</evidence>
<evidence type="ECO:0000255" key="3"/>
<evidence type="ECO:0000305" key="4"/>
<proteinExistence type="inferred from homology"/>
<protein>
    <recommendedName>
        <fullName>Magnesium transport protein CorA</fullName>
    </recommendedName>
</protein>
<dbReference type="EMBL" id="AE017220">
    <property type="protein sequence ID" value="AAX67757.1"/>
    <property type="molecule type" value="Genomic_DNA"/>
</dbReference>
<dbReference type="RefSeq" id="WP_000947139.1">
    <property type="nucleotide sequence ID" value="NC_006905.1"/>
</dbReference>
<dbReference type="SMR" id="Q57HQ5"/>
<dbReference type="KEGG" id="sec:SCH_3851"/>
<dbReference type="HOGENOM" id="CLU_007127_5_0_6"/>
<dbReference type="Proteomes" id="UP000000538">
    <property type="component" value="Chromosome"/>
</dbReference>
<dbReference type="GO" id="GO:0005886">
    <property type="term" value="C:plasma membrane"/>
    <property type="evidence" value="ECO:0007669"/>
    <property type="project" value="UniProtKB-SubCell"/>
</dbReference>
<dbReference type="GO" id="GO:0015087">
    <property type="term" value="F:cobalt ion transmembrane transporter activity"/>
    <property type="evidence" value="ECO:0007669"/>
    <property type="project" value="InterPro"/>
</dbReference>
<dbReference type="GO" id="GO:0015095">
    <property type="term" value="F:magnesium ion transmembrane transporter activity"/>
    <property type="evidence" value="ECO:0007669"/>
    <property type="project" value="InterPro"/>
</dbReference>
<dbReference type="GO" id="GO:0015099">
    <property type="term" value="F:nickel cation transmembrane transporter activity"/>
    <property type="evidence" value="ECO:0007669"/>
    <property type="project" value="TreeGrafter"/>
</dbReference>
<dbReference type="CDD" id="cd12835">
    <property type="entry name" value="EcCorA-like_1"/>
    <property type="match status" value="1"/>
</dbReference>
<dbReference type="FunFam" id="1.20.58.340:FF:000001">
    <property type="entry name" value="Magnesium transport protein CorA"/>
    <property type="match status" value="1"/>
</dbReference>
<dbReference type="Gene3D" id="1.20.58.340">
    <property type="entry name" value="Magnesium transport protein CorA, transmembrane region"/>
    <property type="match status" value="1"/>
</dbReference>
<dbReference type="InterPro" id="IPR045861">
    <property type="entry name" value="CorA_cytoplasmic_dom"/>
</dbReference>
<dbReference type="InterPro" id="IPR050829">
    <property type="entry name" value="CorA_MIT"/>
</dbReference>
<dbReference type="InterPro" id="IPR045863">
    <property type="entry name" value="CorA_TM1_TM2"/>
</dbReference>
<dbReference type="InterPro" id="IPR004488">
    <property type="entry name" value="Mg/Co-transport_prot_CorA"/>
</dbReference>
<dbReference type="InterPro" id="IPR002523">
    <property type="entry name" value="MgTranspt_CorA/ZnTranspt_ZntB"/>
</dbReference>
<dbReference type="NCBIfam" id="TIGR00383">
    <property type="entry name" value="corA"/>
    <property type="match status" value="1"/>
</dbReference>
<dbReference type="PANTHER" id="PTHR47685">
    <property type="entry name" value="MAGNESIUM TRANSPORT PROTEIN CORA"/>
    <property type="match status" value="1"/>
</dbReference>
<dbReference type="PANTHER" id="PTHR47685:SF1">
    <property type="entry name" value="MAGNESIUM TRANSPORT PROTEIN CORA"/>
    <property type="match status" value="1"/>
</dbReference>
<dbReference type="Pfam" id="PF01544">
    <property type="entry name" value="CorA"/>
    <property type="match status" value="1"/>
</dbReference>
<dbReference type="SUPFAM" id="SSF143865">
    <property type="entry name" value="CorA soluble domain-like"/>
    <property type="match status" value="1"/>
</dbReference>
<dbReference type="SUPFAM" id="SSF144083">
    <property type="entry name" value="Magnesium transport protein CorA, transmembrane region"/>
    <property type="match status" value="1"/>
</dbReference>
<keyword id="KW-0997">Cell inner membrane</keyword>
<keyword id="KW-1003">Cell membrane</keyword>
<keyword id="KW-0406">Ion transport</keyword>
<keyword id="KW-0460">Magnesium</keyword>
<keyword id="KW-0472">Membrane</keyword>
<keyword id="KW-0812">Transmembrane</keyword>
<keyword id="KW-1133">Transmembrane helix</keyword>
<keyword id="KW-0813">Transport</keyword>
<comment type="function">
    <text evidence="1 2">Mediates influx of magnesium ions (By similarity). Alternates between open and closed states. Activated by low cytoplasmic Mg(2+) levels. Inactive when cytoplasmic Mg(2+) levels are high (By similarity).</text>
</comment>
<comment type="catalytic activity">
    <reaction evidence="1">
        <text>Mg(2+)(in) = Mg(2+)(out)</text>
        <dbReference type="Rhea" id="RHEA:29827"/>
        <dbReference type="ChEBI" id="CHEBI:18420"/>
    </reaction>
</comment>
<comment type="subunit">
    <text evidence="2">Homopentamer. In the absence of Mg(2+), interactions between subunits are weakened, and dimers, trimers and tetramers can be observed in vitro (By similarity).</text>
</comment>
<comment type="subcellular location">
    <subcellularLocation>
        <location evidence="1">Cell inner membrane</location>
        <topology evidence="2">Multi-pass membrane protein</topology>
    </subcellularLocation>
</comment>
<comment type="domain">
    <text evidence="2">The central ion permeation pathway is formed by the first transmembrane domain from each of the five subunits. Mg(2+) binding strengthens interactions between subunits and leads to the formation of a symmetrical homopentamer surrounding a closed ion permeation pathway. Low Mg(2+) concentrations trigger both a conformation change within each subunit and a loosening of the interactions between subunits. This results in an open ion conduction pathway. In addition, this results in a less symmetrical shape of the whole complex.</text>
</comment>
<comment type="similarity">
    <text evidence="4">Belongs to the CorA metal ion transporter (MIT) (TC 1.A.35) family.</text>
</comment>
<name>CORA_SALCH</name>